<evidence type="ECO:0000255" key="1"/>
<evidence type="ECO:0000255" key="2">
    <source>
        <dbReference type="PROSITE-ProRule" id="PRU00037"/>
    </source>
</evidence>
<evidence type="ECO:0000256" key="3">
    <source>
        <dbReference type="SAM" id="MobiDB-lite"/>
    </source>
</evidence>
<evidence type="ECO:0000269" key="4">
    <source>
    </source>
</evidence>
<evidence type="ECO:0000269" key="5">
    <source>
    </source>
</evidence>
<evidence type="ECO:0000269" key="6">
    <source>
    </source>
</evidence>
<evidence type="ECO:0000269" key="7">
    <source>
    </source>
</evidence>
<evidence type="ECO:0000269" key="8">
    <source>
    </source>
</evidence>
<evidence type="ECO:0000269" key="9">
    <source>
    </source>
</evidence>
<evidence type="ECO:0000269" key="10">
    <source>
    </source>
</evidence>
<evidence type="ECO:0000269" key="11">
    <source>
    </source>
</evidence>
<evidence type="ECO:0000269" key="12">
    <source>
    </source>
</evidence>
<evidence type="ECO:0000269" key="13">
    <source>
    </source>
</evidence>
<evidence type="ECO:0000269" key="14">
    <source>
    </source>
</evidence>
<evidence type="ECO:0000269" key="15">
    <source>
    </source>
</evidence>
<evidence type="ECO:0000303" key="16">
    <source>
    </source>
</evidence>
<evidence type="ECO:0000305" key="17"/>
<keyword id="KW-0025">Alternative splicing</keyword>
<keyword id="KW-0225">Disease variant</keyword>
<keyword id="KW-0887">Epilepsy</keyword>
<keyword id="KW-0342">GTP-binding</keyword>
<keyword id="KW-0547">Nucleotide-binding</keyword>
<keyword id="KW-1267">Proteomics identification</keyword>
<keyword id="KW-1185">Reference proteome</keyword>
<keyword id="KW-0677">Repeat</keyword>
<keyword id="KW-0832">Ubl conjugation</keyword>
<keyword id="KW-0833">Ubl conjugation pathway</keyword>
<proteinExistence type="evidence at protein level"/>
<feature type="chain" id="PRO_0000198962" description="Rho-related BTB domain-containing protein 2">
    <location>
        <begin position="1"/>
        <end position="727"/>
    </location>
</feature>
<feature type="domain" description="BTB 1" evidence="2">
    <location>
        <begin position="266"/>
        <end position="442"/>
    </location>
</feature>
<feature type="domain" description="BTB 2" evidence="2">
    <location>
        <begin position="500"/>
        <end position="567"/>
    </location>
</feature>
<feature type="region of interest" description="Rho-like">
    <location>
        <begin position="1"/>
        <end position="210"/>
    </location>
</feature>
<feature type="region of interest" description="Disordered" evidence="3">
    <location>
        <begin position="304"/>
        <end position="333"/>
    </location>
</feature>
<feature type="region of interest" description="Disordered" evidence="3">
    <location>
        <begin position="703"/>
        <end position="727"/>
    </location>
</feature>
<feature type="compositionally biased region" description="Basic and acidic residues" evidence="3">
    <location>
        <begin position="315"/>
        <end position="324"/>
    </location>
</feature>
<feature type="compositionally biased region" description="Low complexity" evidence="3">
    <location>
        <begin position="706"/>
        <end position="727"/>
    </location>
</feature>
<feature type="binding site" evidence="1">
    <location>
        <begin position="21"/>
        <end position="28"/>
    </location>
    <ligand>
        <name>GTP</name>
        <dbReference type="ChEBI" id="CHEBI:37565"/>
    </ligand>
</feature>
<feature type="binding site" evidence="1">
    <location>
        <begin position="84"/>
        <end position="88"/>
    </location>
    <ligand>
        <name>GTP</name>
        <dbReference type="ChEBI" id="CHEBI:37565"/>
    </ligand>
</feature>
<feature type="binding site" evidence="1">
    <location>
        <begin position="140"/>
        <end position="143"/>
    </location>
    <ligand>
        <name>GTP</name>
        <dbReference type="ChEBI" id="CHEBI:37565"/>
    </ligand>
</feature>
<feature type="splice variant" id="VSP_054098" description="In isoform 2." evidence="16">
    <original>M</original>
    <variation>MQAWRKGPDGPQKTSSDSMSRLM</variation>
    <location>
        <position position="1"/>
    </location>
</feature>
<feature type="splice variant" id="VSP_054099" description="In isoform 3." evidence="17">
    <original>M</original>
    <variation>MKARSRLM</variation>
    <location>
        <position position="1"/>
    </location>
</feature>
<feature type="sequence variant" id="VAR_090468" description="Found in autosomal recessive neurodevelopmental disorder; likely pathogenic." evidence="14">
    <location>
        <begin position="83"/>
        <end position="727"/>
    </location>
</feature>
<feature type="sequence variant" id="VAR_090469" description="In DEE64; likely pathogenic." evidence="14">
    <original>D</original>
    <variation>H</variation>
    <location>
        <position position="92"/>
    </location>
</feature>
<feature type="sequence variant" id="VAR_090470" description="In DEE64; likely pathogenic; no effect on interaction with CUL3; no effect on interaction with MSI2." evidence="14">
    <original>R</original>
    <variation>C</variation>
    <location>
        <position position="94"/>
    </location>
</feature>
<feature type="sequence variant" id="VAR_090471" description="Found in autosomal recessive neurodevelopmental disorder; likely pathogenic." evidence="14">
    <location>
        <begin position="132"/>
        <end position="727"/>
    </location>
</feature>
<feature type="sequence variant" id="VAR_090472" description="In DEE64; uncertain significance." evidence="14">
    <original>R</original>
    <variation>L</variation>
    <location>
        <position position="132"/>
    </location>
</feature>
<feature type="sequence variant" id="VAR_090473" description="In DEE64; uncertain significance; no effect on interaction with CUL3; no effect on interaction with MSI2." evidence="14">
    <original>R</original>
    <variation>Q</variation>
    <location>
        <position position="132"/>
    </location>
</feature>
<feature type="sequence variant" id="VAR_090474" description="Found in autosomal recessive neurodevelopmental disorder; uncertain significance." evidence="14">
    <location>
        <begin position="157"/>
        <end position="727"/>
    </location>
</feature>
<feature type="sequence variant" id="VAR_090475" description="In DEE64; uncertain significance; may affect splicing; no effect on interaction with CUL3; no effect on interaction with MSI2." evidence="14">
    <original>R</original>
    <variation>M</variation>
    <location>
        <position position="161"/>
    </location>
</feature>
<feature type="sequence variant" id="VAR_090476" description="In DEE64; uncertain significance." evidence="14">
    <original>P</original>
    <variation>L</variation>
    <location>
        <position position="240"/>
    </location>
</feature>
<feature type="sequence variant" id="VAR_090477" description="In DEE64; uncertain significance." evidence="14">
    <original>A</original>
    <variation>V</variation>
    <location>
        <position position="449"/>
    </location>
</feature>
<feature type="sequence variant" id="VAR_080812" description="In DEE64; likely pathogenic; reduced RHOBTB2 proteasomal degradation; does not affect interaction with CUL3; no effect on interaction with MSI2; dbSNP:rs1554504656." evidence="10 14">
    <original>A</original>
    <variation>G</variation>
    <location>
        <position position="452"/>
    </location>
</feature>
<feature type="sequence variant" id="VAR_080813" description="In DEE64; pathogenic; reduced RHOBTB2 proteasomal degradation; does not affect interaction with CUL3; no effect on interaction with MSI2; dbSNP:rs1554504663." evidence="10 11 14">
    <original>R</original>
    <variation>H</variation>
    <location>
        <position position="461"/>
    </location>
</feature>
<feature type="sequence variant" id="VAR_080814" description="In DEE64; likely pathogenic; decreased proteasomal degradation; does not affect interaction with CUL3; no effect on interaction with MSI2; dbSNP:rs1563292586." evidence="11 14">
    <original>R</original>
    <variation>C</variation>
    <location>
        <position position="485"/>
    </location>
</feature>
<feature type="sequence variant" id="VAR_079030" description="In DEE64; also found in a patient with Rett syndrome-like phenotype; dbSNP:rs1554504678." evidence="8 10">
    <original>N</original>
    <variation>D</variation>
    <location>
        <position position="488"/>
    </location>
</feature>
<feature type="sequence variant" id="VAR_090478" description="In DEE64; pathogenic." evidence="14">
    <original>R</original>
    <variation>G</variation>
    <location>
        <position position="489"/>
    </location>
</feature>
<feature type="sequence variant" id="VAR_080815" description="In DEE64; pathogenic; reduced RHOBTB2 proteasomal degradation; does not affect interaction with CUL3; no effect on interaction with MSI2; dbSNP:rs1554504684." evidence="10 11 14 15">
    <original>R</original>
    <variation>Q</variation>
    <location>
        <position position="489"/>
    </location>
</feature>
<feature type="sequence variant" id="VAR_080816" description="In DEE64; pathogenic; dbSNP:rs1554504681." evidence="10 12 13 14">
    <original>R</original>
    <variation>W</variation>
    <location>
        <position position="489"/>
    </location>
</feature>
<feature type="sequence variant" id="VAR_090479" description="Found in autosomal recessive neurodevelopmental disorder; uncertain significance." evidence="14">
    <location>
        <begin position="648"/>
        <end position="727"/>
    </location>
</feature>
<feature type="sequence variant" id="VAR_090480" description="Found in autosomal recessive neurodevelopmental disorder; uncertain significance." evidence="14">
    <location>
        <begin position="678"/>
        <end position="727"/>
    </location>
</feature>
<feature type="mutagenesis site" description="No effect on interaction with CUL3. No effect on interaction with MSI2." evidence="14">
    <original>W</original>
    <variation>C</variation>
    <location>
        <position position="217"/>
    </location>
</feature>
<feature type="mutagenesis site" description="No effect on interaction with CUL3. No effect on interaction with MSI2." evidence="14">
    <original>S</original>
    <variation>Y</variation>
    <location>
        <position position="219"/>
    </location>
</feature>
<feature type="mutagenesis site" description="Results in severely decreased interaction with CUL3. No effect on interaction with MSI2." evidence="5 9 11 14">
    <original>Y</original>
    <variation>D</variation>
    <location>
        <position position="284"/>
    </location>
</feature>
<feature type="mutagenesis site" description="No effect on interaction with CUL3. No effect on interaction with MSI2." evidence="14">
    <original>A</original>
    <variation>C</variation>
    <location>
        <position position="449"/>
    </location>
</feature>
<feature type="sequence conflict" description="In Ref. 2; AAG61157." evidence="17" ref="2">
    <original>C</original>
    <variation>G</variation>
    <location>
        <position position="255"/>
    </location>
</feature>
<feature type="sequence conflict" description="In Ref. 6; BAF85552." evidence="17" ref="6">
    <original>I</original>
    <variation>F</variation>
    <location>
        <position position="269"/>
    </location>
</feature>
<dbReference type="EMBL" id="AY009093">
    <property type="protein sequence ID" value="AAG61157.1"/>
    <property type="molecule type" value="mRNA"/>
</dbReference>
<dbReference type="EMBL" id="AF315385">
    <property type="protein sequence ID" value="AAK07562.1"/>
    <property type="molecule type" value="Genomic_DNA"/>
</dbReference>
<dbReference type="EMBL" id="AB018260">
    <property type="protein sequence ID" value="BAA34437.2"/>
    <property type="status" value="ALT_INIT"/>
    <property type="molecule type" value="mRNA"/>
</dbReference>
<dbReference type="EMBL" id="AK292863">
    <property type="protein sequence ID" value="BAF85552.1"/>
    <property type="molecule type" value="mRNA"/>
</dbReference>
<dbReference type="EMBL" id="AC107959">
    <property type="status" value="NOT_ANNOTATED_CDS"/>
    <property type="molecule type" value="Genomic_DNA"/>
</dbReference>
<dbReference type="EMBL" id="CH471080">
    <property type="protein sequence ID" value="EAW63644.1"/>
    <property type="molecule type" value="Genomic_DNA"/>
</dbReference>
<dbReference type="EMBL" id="CH471080">
    <property type="protein sequence ID" value="EAW63646.1"/>
    <property type="molecule type" value="Genomic_DNA"/>
</dbReference>
<dbReference type="EMBL" id="BC034917">
    <property type="protein sequence ID" value="AAH34917.1"/>
    <property type="status" value="ALT_INIT"/>
    <property type="molecule type" value="mRNA"/>
</dbReference>
<dbReference type="CCDS" id="CCDS55210.1">
    <molecule id="Q9BYZ6-2"/>
</dbReference>
<dbReference type="CCDS" id="CCDS55211.1">
    <molecule id="Q9BYZ6-3"/>
</dbReference>
<dbReference type="CCDS" id="CCDS6034.1">
    <molecule id="Q9BYZ6-1"/>
</dbReference>
<dbReference type="RefSeq" id="NP_001153508.1">
    <molecule id="Q9BYZ6-2"/>
    <property type="nucleotide sequence ID" value="NM_001160036.2"/>
</dbReference>
<dbReference type="RefSeq" id="NP_001153509.1">
    <molecule id="Q9BYZ6-3"/>
    <property type="nucleotide sequence ID" value="NM_001160037.2"/>
</dbReference>
<dbReference type="RefSeq" id="NP_001361720.1">
    <molecule id="Q9BYZ6-1"/>
    <property type="nucleotide sequence ID" value="NM_001374791.1"/>
</dbReference>
<dbReference type="RefSeq" id="NP_055993.2">
    <molecule id="Q9BYZ6-1"/>
    <property type="nucleotide sequence ID" value="NM_015178.3"/>
</dbReference>
<dbReference type="RefSeq" id="XP_016868740.1">
    <property type="nucleotide sequence ID" value="XM_017013251.1"/>
</dbReference>
<dbReference type="RefSeq" id="XP_047277563.1">
    <molecule id="Q9BYZ6-2"/>
    <property type="nucleotide sequence ID" value="XM_047421607.1"/>
</dbReference>
<dbReference type="RefSeq" id="XP_047277564.1">
    <molecule id="Q9BYZ6-2"/>
    <property type="nucleotide sequence ID" value="XM_047421608.1"/>
</dbReference>
<dbReference type="RefSeq" id="XP_047277565.1">
    <molecule id="Q9BYZ6-2"/>
    <property type="nucleotide sequence ID" value="XM_047421609.1"/>
</dbReference>
<dbReference type="RefSeq" id="XP_047277566.1">
    <molecule id="Q9BYZ6-2"/>
    <property type="nucleotide sequence ID" value="XM_047421610.1"/>
</dbReference>
<dbReference type="RefSeq" id="XP_047277567.1">
    <molecule id="Q9BYZ6-2"/>
    <property type="nucleotide sequence ID" value="XM_047421611.1"/>
</dbReference>
<dbReference type="RefSeq" id="XP_054216154.1">
    <molecule id="Q9BYZ6-2"/>
    <property type="nucleotide sequence ID" value="XM_054360179.1"/>
</dbReference>
<dbReference type="RefSeq" id="XP_054216155.1">
    <molecule id="Q9BYZ6-2"/>
    <property type="nucleotide sequence ID" value="XM_054360180.1"/>
</dbReference>
<dbReference type="RefSeq" id="XP_054216156.1">
    <molecule id="Q9BYZ6-2"/>
    <property type="nucleotide sequence ID" value="XM_054360181.1"/>
</dbReference>
<dbReference type="RefSeq" id="XP_054216157.1">
    <molecule id="Q9BYZ6-2"/>
    <property type="nucleotide sequence ID" value="XM_054360182.1"/>
</dbReference>
<dbReference type="RefSeq" id="XP_054216158.1">
    <molecule id="Q9BYZ6-2"/>
    <property type="nucleotide sequence ID" value="XM_054360183.1"/>
</dbReference>
<dbReference type="SMR" id="Q9BYZ6"/>
<dbReference type="BioGRID" id="116828">
    <property type="interactions" value="171"/>
</dbReference>
<dbReference type="FunCoup" id="Q9BYZ6">
    <property type="interactions" value="517"/>
</dbReference>
<dbReference type="IntAct" id="Q9BYZ6">
    <property type="interactions" value="16"/>
</dbReference>
<dbReference type="MINT" id="Q9BYZ6"/>
<dbReference type="STRING" id="9606.ENSP00000427926"/>
<dbReference type="iPTMnet" id="Q9BYZ6"/>
<dbReference type="PhosphoSitePlus" id="Q9BYZ6"/>
<dbReference type="BioMuta" id="RHOBTB2"/>
<dbReference type="DMDM" id="26006845"/>
<dbReference type="jPOST" id="Q9BYZ6"/>
<dbReference type="MassIVE" id="Q9BYZ6"/>
<dbReference type="PaxDb" id="9606-ENSP00000427926"/>
<dbReference type="PeptideAtlas" id="Q9BYZ6"/>
<dbReference type="ProteomicsDB" id="19297"/>
<dbReference type="ProteomicsDB" id="19901"/>
<dbReference type="ProteomicsDB" id="79744">
    <molecule id="Q9BYZ6-1"/>
</dbReference>
<dbReference type="Antibodypedia" id="22697">
    <property type="antibodies" value="126 antibodies from 24 providers"/>
</dbReference>
<dbReference type="DNASU" id="23221"/>
<dbReference type="Ensembl" id="ENST00000251822.7">
    <molecule id="Q9BYZ6-1"/>
    <property type="protein sequence ID" value="ENSP00000251822.7"/>
    <property type="gene ID" value="ENSG00000008853.18"/>
</dbReference>
<dbReference type="Ensembl" id="ENST00000519685.5">
    <molecule id="Q9BYZ6-2"/>
    <property type="protein sequence ID" value="ENSP00000427926.1"/>
    <property type="gene ID" value="ENSG00000008853.18"/>
</dbReference>
<dbReference type="Ensembl" id="ENST00000522948.5">
    <molecule id="Q9BYZ6-3"/>
    <property type="protein sequence ID" value="ENSP00000429141.1"/>
    <property type="gene ID" value="ENSG00000008853.18"/>
</dbReference>
<dbReference type="GeneID" id="23221"/>
<dbReference type="KEGG" id="hsa:23221"/>
<dbReference type="MANE-Select" id="ENST00000251822.7">
    <property type="protein sequence ID" value="ENSP00000251822.7"/>
    <property type="RefSeq nucleotide sequence ID" value="NM_015178.3"/>
    <property type="RefSeq protein sequence ID" value="NP_055993.2"/>
</dbReference>
<dbReference type="UCSC" id="uc003xcp.3">
    <molecule id="Q9BYZ6-1"/>
    <property type="organism name" value="human"/>
</dbReference>
<dbReference type="AGR" id="HGNC:18756"/>
<dbReference type="CTD" id="23221"/>
<dbReference type="DisGeNET" id="23221"/>
<dbReference type="GeneCards" id="RHOBTB2"/>
<dbReference type="HGNC" id="HGNC:18756">
    <property type="gene designation" value="RHOBTB2"/>
</dbReference>
<dbReference type="HPA" id="ENSG00000008853">
    <property type="expression patterns" value="Tissue enhanced (brain, lung)"/>
</dbReference>
<dbReference type="MalaCards" id="RHOBTB2"/>
<dbReference type="MIM" id="607352">
    <property type="type" value="gene"/>
</dbReference>
<dbReference type="MIM" id="618004">
    <property type="type" value="phenotype"/>
</dbReference>
<dbReference type="neXtProt" id="NX_Q9BYZ6"/>
<dbReference type="OpenTargets" id="ENSG00000008853"/>
<dbReference type="PharmGKB" id="PA38678"/>
<dbReference type="VEuPathDB" id="HostDB:ENSG00000008853"/>
<dbReference type="eggNOG" id="KOG0393">
    <property type="taxonomic scope" value="Eukaryota"/>
</dbReference>
<dbReference type="GeneTree" id="ENSGT00940000158918"/>
<dbReference type="HOGENOM" id="CLU_015517_0_0_1"/>
<dbReference type="InParanoid" id="Q9BYZ6"/>
<dbReference type="OMA" id="TIDKDCN"/>
<dbReference type="OrthoDB" id="6020506at2759"/>
<dbReference type="PAN-GO" id="Q9BYZ6">
    <property type="GO annotations" value="14 GO annotations based on evolutionary models"/>
</dbReference>
<dbReference type="PhylomeDB" id="Q9BYZ6"/>
<dbReference type="TreeFam" id="TF323347"/>
<dbReference type="PathwayCommons" id="Q9BYZ6"/>
<dbReference type="Reactome" id="R-HSA-9013418">
    <property type="pathway name" value="RHOBTB2 GTPase cycle"/>
</dbReference>
<dbReference type="SignaLink" id="Q9BYZ6"/>
<dbReference type="BioGRID-ORCS" id="23221">
    <property type="hits" value="14 hits in 1189 CRISPR screens"/>
</dbReference>
<dbReference type="ChiTaRS" id="RHOBTB2">
    <property type="organism name" value="human"/>
</dbReference>
<dbReference type="GeneWiki" id="RHOBTB2"/>
<dbReference type="GenomeRNAi" id="23221"/>
<dbReference type="Pharos" id="Q9BYZ6">
    <property type="development level" value="Tbio"/>
</dbReference>
<dbReference type="PRO" id="PR:Q9BYZ6"/>
<dbReference type="Proteomes" id="UP000005640">
    <property type="component" value="Chromosome 8"/>
</dbReference>
<dbReference type="RNAct" id="Q9BYZ6">
    <property type="molecule type" value="protein"/>
</dbReference>
<dbReference type="Bgee" id="ENSG00000008853">
    <property type="expression patterns" value="Expressed in upper lobe of left lung and 136 other cell types or tissues"/>
</dbReference>
<dbReference type="ExpressionAtlas" id="Q9BYZ6">
    <property type="expression patterns" value="baseline and differential"/>
</dbReference>
<dbReference type="GO" id="GO:0042995">
    <property type="term" value="C:cell projection"/>
    <property type="evidence" value="ECO:0000318"/>
    <property type="project" value="GO_Central"/>
</dbReference>
<dbReference type="GO" id="GO:0031410">
    <property type="term" value="C:cytoplasmic vesicle"/>
    <property type="evidence" value="ECO:0000318"/>
    <property type="project" value="GO_Central"/>
</dbReference>
<dbReference type="GO" id="GO:0005856">
    <property type="term" value="C:cytoskeleton"/>
    <property type="evidence" value="ECO:0000318"/>
    <property type="project" value="GO_Central"/>
</dbReference>
<dbReference type="GO" id="GO:0010008">
    <property type="term" value="C:endosome membrane"/>
    <property type="evidence" value="ECO:0000304"/>
    <property type="project" value="Reactome"/>
</dbReference>
<dbReference type="GO" id="GO:0005886">
    <property type="term" value="C:plasma membrane"/>
    <property type="evidence" value="ECO:0000318"/>
    <property type="project" value="GO_Central"/>
</dbReference>
<dbReference type="GO" id="GO:0005525">
    <property type="term" value="F:GTP binding"/>
    <property type="evidence" value="ECO:0000318"/>
    <property type="project" value="GO_Central"/>
</dbReference>
<dbReference type="GO" id="GO:0003924">
    <property type="term" value="F:GTPase activity"/>
    <property type="evidence" value="ECO:0000318"/>
    <property type="project" value="GO_Central"/>
</dbReference>
<dbReference type="GO" id="GO:0019901">
    <property type="term" value="F:protein kinase binding"/>
    <property type="evidence" value="ECO:0000318"/>
    <property type="project" value="GO_Central"/>
</dbReference>
<dbReference type="GO" id="GO:0007015">
    <property type="term" value="P:actin filament organization"/>
    <property type="evidence" value="ECO:0000318"/>
    <property type="project" value="GO_Central"/>
</dbReference>
<dbReference type="GO" id="GO:0030865">
    <property type="term" value="P:cortical cytoskeleton organization"/>
    <property type="evidence" value="ECO:0000318"/>
    <property type="project" value="GO_Central"/>
</dbReference>
<dbReference type="GO" id="GO:0007163">
    <property type="term" value="P:establishment or maintenance of cell polarity"/>
    <property type="evidence" value="ECO:0000318"/>
    <property type="project" value="GO_Central"/>
</dbReference>
<dbReference type="GO" id="GO:0032956">
    <property type="term" value="P:regulation of actin cytoskeleton organization"/>
    <property type="evidence" value="ECO:0000318"/>
    <property type="project" value="GO_Central"/>
</dbReference>
<dbReference type="GO" id="GO:0008360">
    <property type="term" value="P:regulation of cell shape"/>
    <property type="evidence" value="ECO:0000318"/>
    <property type="project" value="GO_Central"/>
</dbReference>
<dbReference type="GO" id="GO:0007165">
    <property type="term" value="P:signal transduction"/>
    <property type="evidence" value="ECO:0000318"/>
    <property type="project" value="GO_Central"/>
</dbReference>
<dbReference type="GO" id="GO:0007264">
    <property type="term" value="P:small GTPase-mediated signal transduction"/>
    <property type="evidence" value="ECO:0007669"/>
    <property type="project" value="InterPro"/>
</dbReference>
<dbReference type="CDD" id="cd18531">
    <property type="entry name" value="BACK_RHOBTB2"/>
    <property type="match status" value="1"/>
</dbReference>
<dbReference type="CDD" id="cd18356">
    <property type="entry name" value="BTB1_POZ_RHOBTB2"/>
    <property type="match status" value="1"/>
</dbReference>
<dbReference type="CDD" id="cd18359">
    <property type="entry name" value="BTB2_POZ_RHOBTB2"/>
    <property type="match status" value="1"/>
</dbReference>
<dbReference type="CDD" id="cd01873">
    <property type="entry name" value="RhoBTB"/>
    <property type="match status" value="1"/>
</dbReference>
<dbReference type="FunFam" id="3.30.710.10:FF:000050">
    <property type="entry name" value="Rho related BTB domain containing 2"/>
    <property type="match status" value="1"/>
</dbReference>
<dbReference type="FunFam" id="3.40.50.300:FF:000177">
    <property type="entry name" value="Rho-related BTB domain-containing protein 2"/>
    <property type="match status" value="1"/>
</dbReference>
<dbReference type="FunFam" id="3.30.710.10:FF:000014">
    <property type="entry name" value="Rho-related BTB domain-containing protein 2 isoform 1"/>
    <property type="match status" value="1"/>
</dbReference>
<dbReference type="Gene3D" id="3.40.50.300">
    <property type="entry name" value="P-loop containing nucleotide triphosphate hydrolases"/>
    <property type="match status" value="1"/>
</dbReference>
<dbReference type="Gene3D" id="3.30.710.10">
    <property type="entry name" value="Potassium Channel Kv1.1, Chain A"/>
    <property type="match status" value="3"/>
</dbReference>
<dbReference type="InterPro" id="IPR000210">
    <property type="entry name" value="BTB/POZ_dom"/>
</dbReference>
<dbReference type="InterPro" id="IPR027417">
    <property type="entry name" value="P-loop_NTPase"/>
</dbReference>
<dbReference type="InterPro" id="IPR011333">
    <property type="entry name" value="SKP1/BTB/POZ_sf"/>
</dbReference>
<dbReference type="InterPro" id="IPR001806">
    <property type="entry name" value="Small_GTPase"/>
</dbReference>
<dbReference type="InterPro" id="IPR003578">
    <property type="entry name" value="Small_GTPase_Rho"/>
</dbReference>
<dbReference type="PANTHER" id="PTHR24072">
    <property type="entry name" value="RHO FAMILY GTPASE"/>
    <property type="match status" value="1"/>
</dbReference>
<dbReference type="Pfam" id="PF00651">
    <property type="entry name" value="BTB"/>
    <property type="match status" value="3"/>
</dbReference>
<dbReference type="Pfam" id="PF00071">
    <property type="entry name" value="Ras"/>
    <property type="match status" value="1"/>
</dbReference>
<dbReference type="PRINTS" id="PR00449">
    <property type="entry name" value="RASTRNSFRMNG"/>
</dbReference>
<dbReference type="SMART" id="SM00225">
    <property type="entry name" value="BTB"/>
    <property type="match status" value="2"/>
</dbReference>
<dbReference type="SMART" id="SM00175">
    <property type="entry name" value="RAB"/>
    <property type="match status" value="1"/>
</dbReference>
<dbReference type="SMART" id="SM00173">
    <property type="entry name" value="RAS"/>
    <property type="match status" value="1"/>
</dbReference>
<dbReference type="SMART" id="SM00174">
    <property type="entry name" value="RHO"/>
    <property type="match status" value="1"/>
</dbReference>
<dbReference type="SUPFAM" id="SSF52540">
    <property type="entry name" value="P-loop containing nucleoside triphosphate hydrolases"/>
    <property type="match status" value="1"/>
</dbReference>
<dbReference type="SUPFAM" id="SSF54695">
    <property type="entry name" value="POZ domain"/>
    <property type="match status" value="2"/>
</dbReference>
<dbReference type="PROSITE" id="PS50097">
    <property type="entry name" value="BTB"/>
    <property type="match status" value="2"/>
</dbReference>
<dbReference type="PROSITE" id="PS51420">
    <property type="entry name" value="RHO"/>
    <property type="match status" value="1"/>
</dbReference>
<reference key="1">
    <citation type="journal article" date="2002" name="Gene">
        <title>Genomic organization and expression profile of the small GTPases of the RhoBTB family in human and mouse.</title>
        <authorList>
            <person name="Ramos S."/>
            <person name="Khademi F."/>
            <person name="Somesh B.P."/>
            <person name="Rivero F."/>
        </authorList>
    </citation>
    <scope>NUCLEOTIDE SEQUENCE [GENOMIC DNA]</scope>
    <scope>TISSUE SPECIFICITY</scope>
</reference>
<reference key="2">
    <citation type="submission" date="2000-10" db="EMBL/GenBank/DDBJ databases">
        <title>Homozygously deleted genes in breast cancer.</title>
        <authorList>
            <person name="Hamaguchi M."/>
            <person name="King D."/>
            <person name="Meth J."/>
            <person name="Odawara T."/>
            <person name="Wigler M."/>
        </authorList>
    </citation>
    <scope>NUCLEOTIDE SEQUENCE [MRNA] (ISOFORM 1)</scope>
</reference>
<reference key="3">
    <citation type="submission" date="2000-10" db="EMBL/GenBank/DDBJ databases">
        <title>Genomic sequence for DBC2.</title>
        <authorList>
            <person name="Hamaguchi M."/>
            <person name="Meth J."/>
            <person name="Odawara T."/>
        </authorList>
    </citation>
    <scope>NUCLEOTIDE SEQUENCE [GENOMIC DNA]</scope>
</reference>
<reference key="4">
    <citation type="journal article" date="1998" name="DNA Res.">
        <title>Prediction of the coding sequences of unidentified human genes. XI. The complete sequences of 100 new cDNA clones from brain which code for large proteins in vitro.</title>
        <authorList>
            <person name="Nagase T."/>
            <person name="Ishikawa K."/>
            <person name="Suyama M."/>
            <person name="Kikuno R."/>
            <person name="Miyajima N."/>
            <person name="Tanaka A."/>
            <person name="Kotani H."/>
            <person name="Nomura N."/>
            <person name="Ohara O."/>
        </authorList>
    </citation>
    <scope>NUCLEOTIDE SEQUENCE [LARGE SCALE MRNA] (ISOFORM 1)</scope>
    <source>
        <tissue>Brain</tissue>
    </source>
</reference>
<reference key="5">
    <citation type="journal article" date="2002" name="DNA Res.">
        <title>Construction of expression-ready cDNA clones for KIAA genes: manual curation of 330 KIAA cDNA clones.</title>
        <authorList>
            <person name="Nakajima D."/>
            <person name="Okazaki N."/>
            <person name="Yamakawa H."/>
            <person name="Kikuno R."/>
            <person name="Ohara O."/>
            <person name="Nagase T."/>
        </authorList>
    </citation>
    <scope>SEQUENCE REVISION</scope>
</reference>
<reference key="6">
    <citation type="journal article" date="2004" name="Nat. Genet.">
        <title>Complete sequencing and characterization of 21,243 full-length human cDNAs.</title>
        <authorList>
            <person name="Ota T."/>
            <person name="Suzuki Y."/>
            <person name="Nishikawa T."/>
            <person name="Otsuki T."/>
            <person name="Sugiyama T."/>
            <person name="Irie R."/>
            <person name="Wakamatsu A."/>
            <person name="Hayashi K."/>
            <person name="Sato H."/>
            <person name="Nagai K."/>
            <person name="Kimura K."/>
            <person name="Makita H."/>
            <person name="Sekine M."/>
            <person name="Obayashi M."/>
            <person name="Nishi T."/>
            <person name="Shibahara T."/>
            <person name="Tanaka T."/>
            <person name="Ishii S."/>
            <person name="Yamamoto J."/>
            <person name="Saito K."/>
            <person name="Kawai Y."/>
            <person name="Isono Y."/>
            <person name="Nakamura Y."/>
            <person name="Nagahari K."/>
            <person name="Murakami K."/>
            <person name="Yasuda T."/>
            <person name="Iwayanagi T."/>
            <person name="Wagatsuma M."/>
            <person name="Shiratori A."/>
            <person name="Sudo H."/>
            <person name="Hosoiri T."/>
            <person name="Kaku Y."/>
            <person name="Kodaira H."/>
            <person name="Kondo H."/>
            <person name="Sugawara M."/>
            <person name="Takahashi M."/>
            <person name="Kanda K."/>
            <person name="Yokoi T."/>
            <person name="Furuya T."/>
            <person name="Kikkawa E."/>
            <person name="Omura Y."/>
            <person name="Abe K."/>
            <person name="Kamihara K."/>
            <person name="Katsuta N."/>
            <person name="Sato K."/>
            <person name="Tanikawa M."/>
            <person name="Yamazaki M."/>
            <person name="Ninomiya K."/>
            <person name="Ishibashi T."/>
            <person name="Yamashita H."/>
            <person name="Murakawa K."/>
            <person name="Fujimori K."/>
            <person name="Tanai H."/>
            <person name="Kimata M."/>
            <person name="Watanabe M."/>
            <person name="Hiraoka S."/>
            <person name="Chiba Y."/>
            <person name="Ishida S."/>
            <person name="Ono Y."/>
            <person name="Takiguchi S."/>
            <person name="Watanabe S."/>
            <person name="Yosida M."/>
            <person name="Hotuta T."/>
            <person name="Kusano J."/>
            <person name="Kanehori K."/>
            <person name="Takahashi-Fujii A."/>
            <person name="Hara H."/>
            <person name="Tanase T.-O."/>
            <person name="Nomura Y."/>
            <person name="Togiya S."/>
            <person name="Komai F."/>
            <person name="Hara R."/>
            <person name="Takeuchi K."/>
            <person name="Arita M."/>
            <person name="Imose N."/>
            <person name="Musashino K."/>
            <person name="Yuuki H."/>
            <person name="Oshima A."/>
            <person name="Sasaki N."/>
            <person name="Aotsuka S."/>
            <person name="Yoshikawa Y."/>
            <person name="Matsunawa H."/>
            <person name="Ichihara T."/>
            <person name="Shiohata N."/>
            <person name="Sano S."/>
            <person name="Moriya S."/>
            <person name="Momiyama H."/>
            <person name="Satoh N."/>
            <person name="Takami S."/>
            <person name="Terashima Y."/>
            <person name="Suzuki O."/>
            <person name="Nakagawa S."/>
            <person name="Senoh A."/>
            <person name="Mizoguchi H."/>
            <person name="Goto Y."/>
            <person name="Shimizu F."/>
            <person name="Wakebe H."/>
            <person name="Hishigaki H."/>
            <person name="Watanabe T."/>
            <person name="Sugiyama A."/>
            <person name="Takemoto M."/>
            <person name="Kawakami B."/>
            <person name="Yamazaki M."/>
            <person name="Watanabe K."/>
            <person name="Kumagai A."/>
            <person name="Itakura S."/>
            <person name="Fukuzumi Y."/>
            <person name="Fujimori Y."/>
            <person name="Komiyama M."/>
            <person name="Tashiro H."/>
            <person name="Tanigami A."/>
            <person name="Fujiwara T."/>
            <person name="Ono T."/>
            <person name="Yamada K."/>
            <person name="Fujii Y."/>
            <person name="Ozaki K."/>
            <person name="Hirao M."/>
            <person name="Ohmori Y."/>
            <person name="Kawabata A."/>
            <person name="Hikiji T."/>
            <person name="Kobatake N."/>
            <person name="Inagaki H."/>
            <person name="Ikema Y."/>
            <person name="Okamoto S."/>
            <person name="Okitani R."/>
            <person name="Kawakami T."/>
            <person name="Noguchi S."/>
            <person name="Itoh T."/>
            <person name="Shigeta K."/>
            <person name="Senba T."/>
            <person name="Matsumura K."/>
            <person name="Nakajima Y."/>
            <person name="Mizuno T."/>
            <person name="Morinaga M."/>
            <person name="Sasaki M."/>
            <person name="Togashi T."/>
            <person name="Oyama M."/>
            <person name="Hata H."/>
            <person name="Watanabe M."/>
            <person name="Komatsu T."/>
            <person name="Mizushima-Sugano J."/>
            <person name="Satoh T."/>
            <person name="Shirai Y."/>
            <person name="Takahashi Y."/>
            <person name="Nakagawa K."/>
            <person name="Okumura K."/>
            <person name="Nagase T."/>
            <person name="Nomura N."/>
            <person name="Kikuchi H."/>
            <person name="Masuho Y."/>
            <person name="Yamashita R."/>
            <person name="Nakai K."/>
            <person name="Yada T."/>
            <person name="Nakamura Y."/>
            <person name="Ohara O."/>
            <person name="Isogai T."/>
            <person name="Sugano S."/>
        </authorList>
    </citation>
    <scope>NUCLEOTIDE SEQUENCE [LARGE SCALE MRNA] (ISOFORM 1)</scope>
    <source>
        <tissue>Trachea</tissue>
    </source>
</reference>
<reference key="7">
    <citation type="journal article" date="2006" name="Nature">
        <title>DNA sequence and analysis of human chromosome 8.</title>
        <authorList>
            <person name="Nusbaum C."/>
            <person name="Mikkelsen T.S."/>
            <person name="Zody M.C."/>
            <person name="Asakawa S."/>
            <person name="Taudien S."/>
            <person name="Garber M."/>
            <person name="Kodira C.D."/>
            <person name="Schueler M.G."/>
            <person name="Shimizu A."/>
            <person name="Whittaker C.A."/>
            <person name="Chang J.L."/>
            <person name="Cuomo C.A."/>
            <person name="Dewar K."/>
            <person name="FitzGerald M.G."/>
            <person name="Yang X."/>
            <person name="Allen N.R."/>
            <person name="Anderson S."/>
            <person name="Asakawa T."/>
            <person name="Blechschmidt K."/>
            <person name="Bloom T."/>
            <person name="Borowsky M.L."/>
            <person name="Butler J."/>
            <person name="Cook A."/>
            <person name="Corum B."/>
            <person name="DeArellano K."/>
            <person name="DeCaprio D."/>
            <person name="Dooley K.T."/>
            <person name="Dorris L. III"/>
            <person name="Engels R."/>
            <person name="Gloeckner G."/>
            <person name="Hafez N."/>
            <person name="Hagopian D.S."/>
            <person name="Hall J.L."/>
            <person name="Ishikawa S.K."/>
            <person name="Jaffe D.B."/>
            <person name="Kamat A."/>
            <person name="Kudoh J."/>
            <person name="Lehmann R."/>
            <person name="Lokitsang T."/>
            <person name="Macdonald P."/>
            <person name="Major J.E."/>
            <person name="Matthews C.D."/>
            <person name="Mauceli E."/>
            <person name="Menzel U."/>
            <person name="Mihalev A.H."/>
            <person name="Minoshima S."/>
            <person name="Murayama Y."/>
            <person name="Naylor J.W."/>
            <person name="Nicol R."/>
            <person name="Nguyen C."/>
            <person name="O'Leary S.B."/>
            <person name="O'Neill K."/>
            <person name="Parker S.C.J."/>
            <person name="Polley A."/>
            <person name="Raymond C.K."/>
            <person name="Reichwald K."/>
            <person name="Rodriguez J."/>
            <person name="Sasaki T."/>
            <person name="Schilhabel M."/>
            <person name="Siddiqui R."/>
            <person name="Smith C.L."/>
            <person name="Sneddon T.P."/>
            <person name="Talamas J.A."/>
            <person name="Tenzin P."/>
            <person name="Topham K."/>
            <person name="Venkataraman V."/>
            <person name="Wen G."/>
            <person name="Yamazaki S."/>
            <person name="Young S.K."/>
            <person name="Zeng Q."/>
            <person name="Zimmer A.R."/>
            <person name="Rosenthal A."/>
            <person name="Birren B.W."/>
            <person name="Platzer M."/>
            <person name="Shimizu N."/>
            <person name="Lander E.S."/>
        </authorList>
    </citation>
    <scope>NUCLEOTIDE SEQUENCE [LARGE SCALE GENOMIC DNA]</scope>
</reference>
<reference key="8">
    <citation type="submission" date="2005-09" db="EMBL/GenBank/DDBJ databases">
        <authorList>
            <person name="Mural R.J."/>
            <person name="Istrail S."/>
            <person name="Sutton G.G."/>
            <person name="Florea L."/>
            <person name="Halpern A.L."/>
            <person name="Mobarry C.M."/>
            <person name="Lippert R."/>
            <person name="Walenz B."/>
            <person name="Shatkay H."/>
            <person name="Dew I."/>
            <person name="Miller J.R."/>
            <person name="Flanigan M.J."/>
            <person name="Edwards N.J."/>
            <person name="Bolanos R."/>
            <person name="Fasulo D."/>
            <person name="Halldorsson B.V."/>
            <person name="Hannenhalli S."/>
            <person name="Turner R."/>
            <person name="Yooseph S."/>
            <person name="Lu F."/>
            <person name="Nusskern D.R."/>
            <person name="Shue B.C."/>
            <person name="Zheng X.H."/>
            <person name="Zhong F."/>
            <person name="Delcher A.L."/>
            <person name="Huson D.H."/>
            <person name="Kravitz S.A."/>
            <person name="Mouchard L."/>
            <person name="Reinert K."/>
            <person name="Remington K.A."/>
            <person name="Clark A.G."/>
            <person name="Waterman M.S."/>
            <person name="Eichler E.E."/>
            <person name="Adams M.D."/>
            <person name="Hunkapiller M.W."/>
            <person name="Myers E.W."/>
            <person name="Venter J.C."/>
        </authorList>
    </citation>
    <scope>NUCLEOTIDE SEQUENCE [LARGE SCALE GENOMIC DNA]</scope>
</reference>
<reference key="9">
    <citation type="journal article" date="2004" name="Genome Res.">
        <title>The status, quality, and expansion of the NIH full-length cDNA project: the Mammalian Gene Collection (MGC).</title>
        <authorList>
            <consortium name="The MGC Project Team"/>
        </authorList>
    </citation>
    <scope>NUCLEOTIDE SEQUENCE [LARGE SCALE MRNA] (ISOFORM 2)</scope>
    <source>
        <tissue>Eye</tissue>
    </source>
</reference>
<reference key="10">
    <citation type="journal article" date="2004" name="Genes Dev.">
        <title>RhoBTB2 is a substrate of the mammalian Cul3 ubiquitin ligase complex.</title>
        <authorList>
            <person name="Wilkins A."/>
            <person name="Ping Q."/>
            <person name="Carpenter C.L."/>
        </authorList>
    </citation>
    <scope>FUNCTION</scope>
    <scope>INTERACTION WITH CUL3</scope>
    <scope>UBIQUITINATION</scope>
    <scope>MUTAGENESIS OF TYR-284</scope>
</reference>
<reference key="11">
    <citation type="journal article" date="2011" name="Gene">
        <title>RhoBTB2 (DBC2) functions as tumor suppressor via inhibiting proliferation, preventing colony formation and inducing apoptosis in breast cancer cells.</title>
        <authorList>
            <person name="Mao H."/>
            <person name="Zhang L."/>
            <person name="Yang Y."/>
            <person name="Sun J."/>
            <person name="Deng B."/>
            <person name="Feng J."/>
            <person name="Shao Q."/>
            <person name="Feng A."/>
            <person name="Song B."/>
            <person name="Qu X."/>
        </authorList>
    </citation>
    <scope>FUNCTION</scope>
</reference>
<reference key="12">
    <citation type="journal article" date="2015" name="PLoS ONE">
        <title>Client proteins and small molecule inhibitors display distinct binding preferences for constitutive and stress-induced HSP90 isoforms and their conformationally restricted mutants.</title>
        <authorList>
            <person name="Prince T.L."/>
            <person name="Kijima T."/>
            <person name="Tatokoro M."/>
            <person name="Lee S."/>
            <person name="Tsutsumi S."/>
            <person name="Yim K."/>
            <person name="Rivas C."/>
            <person name="Alarcon S."/>
            <person name="Schwartz H."/>
            <person name="Khamit-Kush K."/>
            <person name="Scroggins B.T."/>
            <person name="Beebe K."/>
            <person name="Trepel J.B."/>
            <person name="Neckers L."/>
        </authorList>
    </citation>
    <scope>INTERACTION WITH HSP90AA1 AND HSP90AB1</scope>
</reference>
<reference key="13">
    <citation type="journal article" date="2017" name="Oncogene">
        <title>DBC2/RhoBTB2 functions as a tumor suppressor protein via Musashi-2 ubiquitination in breast cancer.</title>
        <authorList>
            <person name="Choi Y.M."/>
            <person name="Kim K.B."/>
            <person name="Lee J.H."/>
            <person name="Chun Y.K."/>
            <person name="An I.S."/>
            <person name="An S."/>
            <person name="Bae S."/>
        </authorList>
    </citation>
    <scope>FUNCTION</scope>
    <scope>INTERACTION WITH MSI2</scope>
    <scope>MUTAGENESIS OF TYR-284</scope>
</reference>
<reference key="14">
    <citation type="journal article" date="2016" name="J. Med. Genet.">
        <title>Identification of novel genetic causes of Rett syndrome-like phenotypes.</title>
        <authorList>
            <person name="Lopes F."/>
            <person name="Barbosa M."/>
            <person name="Ameur A."/>
            <person name="Soares G."/>
            <person name="de Sa J."/>
            <person name="Dias A.I."/>
            <person name="Oliveira G."/>
            <person name="Cabral P."/>
            <person name="Temudo T."/>
            <person name="Calado E."/>
            <person name="Cruz I.F."/>
            <person name="Vieira J.P."/>
            <person name="Oliveira R."/>
            <person name="Esteves S."/>
            <person name="Sauer S."/>
            <person name="Jonasson I."/>
            <person name="Syvaenen A.C."/>
            <person name="Gyllensten U."/>
            <person name="Pinto D."/>
            <person name="Maciel P."/>
        </authorList>
    </citation>
    <scope>VARIANT ASP-488</scope>
</reference>
<reference key="15">
    <citation type="journal article" date="2018" name="Am. J. Hum. Genet.">
        <title>Missense variants in RHOBTB2 cause a developmental and epileptic encephalopathy in humans, and altered levels cause neurological defects in Drosophila.</title>
        <authorList>
            <consortium name="Deciphering Developmental Disorders Study"/>
            <person name="Straub J."/>
            <person name="Konrad E.D.H."/>
            <person name="Gruener J."/>
            <person name="Toutain A."/>
            <person name="Bok L.A."/>
            <person name="Cho M.T."/>
            <person name="Crawford H.P."/>
            <person name="Dubbs H."/>
            <person name="Douglas G."/>
            <person name="Jobling R."/>
            <person name="Johnson D."/>
            <person name="Krock B."/>
            <person name="Mikati M.A."/>
            <person name="Nesbitt A."/>
            <person name="Nicolai J."/>
            <person name="Phillips M."/>
            <person name="Poduri A."/>
            <person name="Ortiz-Gonzalez X.R."/>
            <person name="Powis Z."/>
            <person name="Santani A."/>
            <person name="Smith L."/>
            <person name="Stegmann A.P.A."/>
            <person name="Stumpel C."/>
            <person name="Vreeburg M."/>
            <person name="Fliedner A."/>
            <person name="Gregor A."/>
            <person name="Sticht H."/>
            <person name="Zweier C."/>
        </authorList>
    </citation>
    <scope>VARIANTS DEE64 GLY-452; HIS-461; ASP-488; GLN-489 AND TRP-489</scope>
    <scope>CHARACTERIZATION OF VARIANTS DEE64 GLY-452; HIS-461 AND GLN-489</scope>
    <scope>INVOLVEMENT IN DEE64</scope>
    <scope>INTERACTION WITH CUL3</scope>
</reference>
<reference key="16">
    <citation type="journal article" date="2018" name="Hum. Mutat.">
        <title>De novo variants in RHOBTB2, an atypical Rho GTPase gene, cause epileptic encephalopathy.</title>
        <authorList>
            <person name="Belal H."/>
            <person name="Nakashima M."/>
            <person name="Matsumoto H."/>
            <person name="Yokochi K."/>
            <person name="Taniguchi-Ikeda M."/>
            <person name="Aoto K."/>
            <person name="Amin M.B."/>
            <person name="Maruyama A."/>
            <person name="Nagase H."/>
            <person name="Mizuguchi T."/>
            <person name="Miyatake S."/>
            <person name="Miyake N."/>
            <person name="Iijima K."/>
            <person name="Nonoyama S."/>
            <person name="Matsumoto N."/>
            <person name="Saitsu H."/>
        </authorList>
    </citation>
    <scope>VARIANTS DEE64 HIS-461; CYS-485 AND GLN-489</scope>
    <scope>CHARACTERIZATION OF VARIANTS DEE64 HIS-461; CYS-485 AND GLN-489</scope>
    <scope>MUTAGENESIS OF TYR-284</scope>
    <scope>INVOLVEMENT IN DEE64</scope>
</reference>
<reference key="17">
    <citation type="journal article" date="2023" name="J. Pediatr. Genet.">
        <title>RHOBTB2 p.Arg511Trp Mutation in Early Infantile Epileptic Encephalopathy-64: Review and Case Report.</title>
        <authorList>
            <person name="Fonseca J."/>
            <person name="Melo C."/>
            <person name="Ferreira C."/>
            <person name="Sampaio M."/>
            <person name="Sousa R."/>
            <person name="Leao M."/>
        </authorList>
    </citation>
    <scope>VARIANT DEE64 TRP-489</scope>
    <scope>INVOLVEMENT IN DEE64</scope>
</reference>
<reference key="18">
    <citation type="journal article" date="2022" name="Mol. Genet. Genomic Med.">
        <title>Developmental and epileptic encephalopathy related to a heterozygous variant of the RHOBTB2 gene: A case report from French Guiana.</title>
        <authorList>
            <person name="Defo A."/>
            <person name="Verloes A."/>
            <person name="Elenga N."/>
        </authorList>
    </citation>
    <scope>VARIANT DEE64 TRP-489</scope>
    <scope>INVOLVEMENT IN DEE64</scope>
</reference>
<reference key="19">
    <citation type="journal article" date="2023" name="Genet. Med.">
        <title>Genotype-phenotype correlations in RHOBTB2-associated neurodevelopmental disorders.</title>
        <authorList>
            <person name="Langhammer F."/>
            <person name="Maroofian R."/>
            <person name="Badar R."/>
            <person name="Gregor A."/>
            <person name="Rochman M."/>
            <person name="Ratliff J.B."/>
            <person name="Koopmans M."/>
            <person name="Herget T."/>
            <person name="Hempel M."/>
            <person name="Kortuem F."/>
            <person name="Heron D."/>
            <person name="Mignot C."/>
            <person name="Keren B."/>
            <person name="Brooks S."/>
            <person name="Botti C."/>
            <person name="Ben-Zeev B."/>
            <person name="Argilli E."/>
            <person name="Sherr E.H."/>
            <person name="Gowda V.K."/>
            <person name="Srinivasan V.M."/>
            <person name="Bakhtiari S."/>
            <person name="Kruer M.C."/>
            <person name="Salih M.A."/>
            <person name="Kuechler A."/>
            <person name="Muller E.A."/>
            <person name="Blocker K."/>
            <person name="Kuismin O."/>
            <person name="Park K.L."/>
            <person name="Kochhar A."/>
            <person name="Brown K."/>
            <person name="Ramanathan S."/>
            <person name="Clark R.D."/>
            <person name="Elgizouli M."/>
            <person name="Melikishvili G."/>
            <person name="Tabatadze N."/>
            <person name="Stark Z."/>
            <person name="Mirzaa G.M."/>
            <person name="Ong J."/>
            <person name="Grasshoff U."/>
            <person name="Bevot A."/>
            <person name="von Wintzingerode L."/>
            <person name="Jamra R.A."/>
            <person name="Hennig Y."/>
            <person name="Goldenberg P."/>
            <person name="Al Alam C."/>
            <person name="Charif M."/>
            <person name="Boulouiz R."/>
            <person name="Bellaoui M."/>
            <person name="Amrani R."/>
            <person name="Al Mutairi F."/>
            <person name="Tamim A.M."/>
            <person name="Abdulwahab F."/>
            <person name="Alkuraya F.S."/>
            <person name="Khouj E.M."/>
            <person name="Alvi J.R."/>
            <person name="Sultan T."/>
            <person name="Hashemi N."/>
            <person name="Karimiani E.G."/>
            <person name="Ashrafzadeh F."/>
            <person name="Imannezhad S."/>
            <person name="Efthymiou S."/>
            <person name="Houlden H."/>
            <person name="Sticht H."/>
            <person name="Zweier C."/>
        </authorList>
    </citation>
    <scope>VARIANTS DEE64 HIS-92; CYS-94; GLN-132; LEU-132; MET-161; LEU-240; VAL-449; GLY-452; HIS-461; CYS-485; TRP-489; GLN-489 AND GLY-489</scope>
    <scope>INVOLVEMENT IN DEE64 AND AUTOSOMAL RECESSIVE NEURODEVELOPMENTAL DISORDER</scope>
    <scope>CHARACTERIZATION OF VARIANTS DEE64 CYS-94; GLN-132; MET-161; GLY-452; HIS-461; CYS-485 AND GLN-489</scope>
    <scope>INTERACTION WITH CUL3 AND MSI2</scope>
    <scope>MUTAGENESIS OF TRP-217; SER-219; TYR-284 AND ALA-449</scope>
    <scope>VARIANTS 83-TRP--VAL-727 DEL; 132-ARG--VAL-727 DEL; 157-ARG--VAL-727 DEL; 648-ARG--VAL-727 DEL AND 678-TYR--VAL-727 DEL</scope>
</reference>
<reference key="20">
    <citation type="journal article" date="2025" name="Mol. Genet. Genomic Med.">
        <title>RHOBTB2 Variant p.Arg511Gln Causes Developmental and Epileptic Encephalopathy Type 64 in an Infant: A Case Report and Hotspot Variant Analysis.</title>
        <authorList>
            <person name="Liu Q."/>
            <person name="Li F."/>
            <person name="Ruan Q."/>
            <person name="Wang N."/>
            <person name="Fan Z."/>
        </authorList>
    </citation>
    <scope>VARIANT DEE64 GLN-489</scope>
    <scope>INVOLVEMENT IN DEE64</scope>
</reference>
<accession>Q9BYZ6</accession>
<accession>A8K9Z8</accession>
<accession>D3DSR8</accession>
<accession>E9PBU2</accession>
<accession>E9PEI7</accession>
<accession>O94825</accession>
<accession>Q8N4A8</accession>
<accession>Q9BZK6</accession>
<organism>
    <name type="scientific">Homo sapiens</name>
    <name type="common">Human</name>
    <dbReference type="NCBI Taxonomy" id="9606"/>
    <lineage>
        <taxon>Eukaryota</taxon>
        <taxon>Metazoa</taxon>
        <taxon>Chordata</taxon>
        <taxon>Craniata</taxon>
        <taxon>Vertebrata</taxon>
        <taxon>Euteleostomi</taxon>
        <taxon>Mammalia</taxon>
        <taxon>Eutheria</taxon>
        <taxon>Euarchontoglires</taxon>
        <taxon>Primates</taxon>
        <taxon>Haplorrhini</taxon>
        <taxon>Catarrhini</taxon>
        <taxon>Hominidae</taxon>
        <taxon>Homo</taxon>
    </lineage>
</organism>
<name>RHBT2_HUMAN</name>
<protein>
    <recommendedName>
        <fullName>Rho-related BTB domain-containing protein 2</fullName>
    </recommendedName>
    <alternativeName>
        <fullName>Deleted in breast cancer 2 gene protein</fullName>
    </alternativeName>
    <alternativeName>
        <fullName>p83</fullName>
    </alternativeName>
</protein>
<comment type="function">
    <text evidence="5 6 9">Regulator of cell proliferation and apoptosis (PubMed:21801820). It likely functions as a substrate-adapter that recruits key substrates, e.g. MSI2, to CUL3-based ubiquitin ligase complexes for degradation (PubMed:15107402, PubMed:27941885). Required for MSI2 ubiquitination and degradation (PubMed:27941885).</text>
</comment>
<comment type="subunit">
    <text evidence="5 7 9 10 14">Interacts with HSP90AA1 and HSP90AB1 (PubMed:26517842). Forms a complex with CUL3 and RBX1 (PubMed:15107402). Interacts (via BTB 1 domain) with CUL3 (PubMed:15107402, PubMed:29276004, PubMed:37165955). Interacts with MSI2 (PubMed:27941885, PubMed:37165955).</text>
</comment>
<comment type="alternative products">
    <event type="alternative splicing"/>
    <isoform>
        <id>Q9BYZ6-1</id>
        <name>1</name>
        <sequence type="displayed"/>
    </isoform>
    <isoform>
        <id>Q9BYZ6-2</id>
        <name>2</name>
        <sequence type="described" ref="VSP_054098"/>
    </isoform>
    <isoform>
        <id>Q9BYZ6-3</id>
        <name>3</name>
        <sequence type="described" ref="VSP_054099"/>
    </isoform>
</comment>
<comment type="tissue specificity">
    <text evidence="4">Ubiquitous, with highest levels in neural tissues. Expression is also detected in fetal lung, heart, and brain.</text>
</comment>
<comment type="PTM">
    <text evidence="5">Autoubiquitinated by RHOBTB2-CUL3-RBX1 ubiquitin ligase complex.</text>
</comment>
<comment type="disease" evidence="10 11 12 13 14 15">
    <disease id="DI-05265">
        <name>Developmental and epileptic encephalopathy 64</name>
        <acronym>DEE64</acronym>
        <description>A form of epileptic encephalopathy, a heterogeneous group of severe early-onset epilepsies characterized by refractory seizures, neurodevelopmental impairment, and poor prognosis. Development is normal prior to seizure onset, after which cognitive and motor delays become apparent. DEE64 is an autosomal dominant form characterized by onset of seizures usually in the first year of life. Seizure types are variable and include focal dyscognitive and generalized tonic-clonic seizures, as well as febrile seizures in the mildest affected individuals. Seizures tend to respond to medical treatment.</description>
        <dbReference type="MIM" id="618004"/>
    </disease>
    <text>The disease is caused by variants affecting the gene represented in this entry.</text>
</comment>
<comment type="disease">
    <text evidence="14">Biallelic variants in RHOBTB2 may be involved in autosomal recessive neurodevelopmental disorders. Affected individuals present with variable neurodevelopmental phenotypes, including intellectual disability and seizures.</text>
</comment>
<comment type="similarity">
    <text evidence="17">Belongs to the small GTPase superfamily. Rho family.</text>
</comment>
<comment type="sequence caution" evidence="17">
    <conflict type="erroneous initiation">
        <sequence resource="EMBL-CDS" id="AAH34917"/>
    </conflict>
    <text>Truncated N-terminus.</text>
</comment>
<comment type="sequence caution" evidence="17">
    <conflict type="erroneous initiation">
        <sequence resource="EMBL-CDS" id="BAA34437"/>
    </conflict>
    <text>Extended N-terminus.</text>
</comment>
<comment type="online information" name="Atlas of Genetics and Cytogenetics in Oncology and Haematology">
    <link uri="https://atlasgeneticsoncology.org/gene/42109/RHOBTB2"/>
</comment>
<sequence>MDSDMDYERPNVETIKCVVVGDNAVGKTRLICARACNATLTQYQLLATHVPTVWAIDQYRVCQEVLERSRDVVDDVSVSLRLWDTFGDHHKDRRFAYGRSDVVVLCFSIANPNSLHHVKTMWYPEIKHFCPRAPVILVGCQLDLRYADLEAVNRARRPLARPIKPNEILPPEKGREVAKELGIPYYETSVVAQFGIKDVFDNAIRAALISRRHLQFWKSHLRNVQRPLLQAPFLPPKPPPPIIVVPDPPSSSEECPAHLLEDPLCADVILVLQERVRIFAHKIYLSTSSSKFYDLFLMDLSEGELGGPSEPGGTHPEDHQGHSDQHHHHHHHHHGRDFLLRAASFDVCESVDEAGGSGPAGLRASTSDGILRGNGTGYLPGRGRVLSSWSRAFVSIQEEMAEDPLTYKSRLMVVVKMDSSIQPGPFRAVLKYLYTGELDENERDLMHIAHIAELLEVFDLRMMVANILNNEAFMNQEITKAFHVRRTNRVKECLAKGTFSDVTFILDDGTISAHKPLLISSCDWMAAMFGGPFVESSTREVVFPYTSKSCMRAVLEYLYTGMFTSSPDLDDMKLIILANRLCLPHLVALTEQYTVTGLMEATQMMVDIDGDVLVFLELAQFHCAYQLADWCLHHICTNYNNVCRKFPRDMKAMSPENQEYFEKHRWPPVWYLKEEDHYQRARKEREKEDYLHLKRQPKRRWLFWNSPSSPSSSAASSSSPSSSSAVV</sequence>
<gene>
    <name type="primary">RHOBTB2</name>
    <name type="synonym">DBC2</name>
    <name type="synonym">KIAA0717</name>
</gene>